<protein>
    <recommendedName>
        <fullName>Autophagy-related protein 29</fullName>
    </recommendedName>
</protein>
<comment type="function">
    <text evidence="1">Plays a role in autophagy. Functions at the preautophagosomal structure (PAS) in order to form normal autophagosomes under starvation conditions. Also plays a role in mitophagy and regulation of filamentous growth (By similarity).</text>
</comment>
<comment type="subcellular location">
    <subcellularLocation>
        <location evidence="1">Preautophagosomal structure</location>
    </subcellularLocation>
    <text evidence="1">Also localizes to other perivacuolar punctate structures.</text>
</comment>
<comment type="similarity">
    <text evidence="2">Belongs to the ATG29 family.</text>
</comment>
<proteinExistence type="inferred from homology"/>
<evidence type="ECO:0000250" key="1"/>
<evidence type="ECO:0000305" key="2"/>
<sequence length="154" mass="17595">MNNDNTKVYVRVAGKRPENFVETKPFIWDSRRDKILWTKISKIDSLEDMDWQELGADLGAPEPFLKKRSYTLFQNQLKVLSNQIDVTSNTRSSSESRNSVDNNILQNLQASRIMNHKLDKTDNLANNQESSSELSNLSVSKSALEDALMDCLQL</sequence>
<gene>
    <name type="primary">ATG29</name>
    <name type="ordered locus">KLLA0C09933g</name>
</gene>
<name>ATG29_KLULA</name>
<organism>
    <name type="scientific">Kluyveromyces lactis (strain ATCC 8585 / CBS 2359 / DSM 70799 / NBRC 1267 / NRRL Y-1140 / WM37)</name>
    <name type="common">Yeast</name>
    <name type="synonym">Candida sphaerica</name>
    <dbReference type="NCBI Taxonomy" id="284590"/>
    <lineage>
        <taxon>Eukaryota</taxon>
        <taxon>Fungi</taxon>
        <taxon>Dikarya</taxon>
        <taxon>Ascomycota</taxon>
        <taxon>Saccharomycotina</taxon>
        <taxon>Saccharomycetes</taxon>
        <taxon>Saccharomycetales</taxon>
        <taxon>Saccharomycetaceae</taxon>
        <taxon>Kluyveromyces</taxon>
    </lineage>
</organism>
<accession>Q6CTU8</accession>
<dbReference type="EMBL" id="CR382123">
    <property type="protein sequence ID" value="CAH01492.1"/>
    <property type="molecule type" value="Genomic_DNA"/>
</dbReference>
<dbReference type="RefSeq" id="XP_452641.1">
    <property type="nucleotide sequence ID" value="XM_452641.1"/>
</dbReference>
<dbReference type="SASBDB" id="Q6CTU8"/>
<dbReference type="SMR" id="Q6CTU8"/>
<dbReference type="DIP" id="DIP-61494N"/>
<dbReference type="FunCoup" id="Q6CTU8">
    <property type="interactions" value="81"/>
</dbReference>
<dbReference type="IntAct" id="Q6CTU8">
    <property type="interactions" value="2"/>
</dbReference>
<dbReference type="STRING" id="284590.Q6CTU8"/>
<dbReference type="PaxDb" id="284590-Q6CTU8"/>
<dbReference type="KEGG" id="kla:KLLA0_C09933g"/>
<dbReference type="eggNOG" id="ENOG502S1W0">
    <property type="taxonomic scope" value="Eukaryota"/>
</dbReference>
<dbReference type="HOGENOM" id="CLU_121102_0_0_1"/>
<dbReference type="InParanoid" id="Q6CTU8"/>
<dbReference type="OMA" id="RKSEINW"/>
<dbReference type="Proteomes" id="UP000000598">
    <property type="component" value="Chromosome C"/>
</dbReference>
<dbReference type="GO" id="GO:0000407">
    <property type="term" value="C:phagophore assembly site"/>
    <property type="evidence" value="ECO:0007669"/>
    <property type="project" value="UniProtKB-SubCell"/>
</dbReference>
<dbReference type="GO" id="GO:0000045">
    <property type="term" value="P:autophagosome assembly"/>
    <property type="evidence" value="ECO:0007669"/>
    <property type="project" value="InterPro"/>
</dbReference>
<dbReference type="GO" id="GO:0015031">
    <property type="term" value="P:protein transport"/>
    <property type="evidence" value="ECO:0007669"/>
    <property type="project" value="UniProtKB-KW"/>
</dbReference>
<dbReference type="Gene3D" id="1.10.10.2570">
    <property type="match status" value="1"/>
</dbReference>
<dbReference type="InterPro" id="IPR039113">
    <property type="entry name" value="ATG29"/>
</dbReference>
<dbReference type="InterPro" id="IPR040666">
    <property type="entry name" value="Atg29_N"/>
</dbReference>
<dbReference type="InterPro" id="IPR039362">
    <property type="entry name" value="ATG29_sf"/>
</dbReference>
<dbReference type="PANTHER" id="PTHR40012">
    <property type="entry name" value="AUTOPHAGY-RELATED PROTEIN 29"/>
    <property type="match status" value="1"/>
</dbReference>
<dbReference type="PANTHER" id="PTHR40012:SF1">
    <property type="entry name" value="AUTOPHAGY-RELATED PROTEIN 29"/>
    <property type="match status" value="1"/>
</dbReference>
<dbReference type="Pfam" id="PF18388">
    <property type="entry name" value="ATG29_N"/>
    <property type="match status" value="1"/>
</dbReference>
<reference key="1">
    <citation type="journal article" date="2004" name="Nature">
        <title>Genome evolution in yeasts.</title>
        <authorList>
            <person name="Dujon B."/>
            <person name="Sherman D."/>
            <person name="Fischer G."/>
            <person name="Durrens P."/>
            <person name="Casaregola S."/>
            <person name="Lafontaine I."/>
            <person name="de Montigny J."/>
            <person name="Marck C."/>
            <person name="Neuveglise C."/>
            <person name="Talla E."/>
            <person name="Goffard N."/>
            <person name="Frangeul L."/>
            <person name="Aigle M."/>
            <person name="Anthouard V."/>
            <person name="Babour A."/>
            <person name="Barbe V."/>
            <person name="Barnay S."/>
            <person name="Blanchin S."/>
            <person name="Beckerich J.-M."/>
            <person name="Beyne E."/>
            <person name="Bleykasten C."/>
            <person name="Boisrame A."/>
            <person name="Boyer J."/>
            <person name="Cattolico L."/>
            <person name="Confanioleri F."/>
            <person name="de Daruvar A."/>
            <person name="Despons L."/>
            <person name="Fabre E."/>
            <person name="Fairhead C."/>
            <person name="Ferry-Dumazet H."/>
            <person name="Groppi A."/>
            <person name="Hantraye F."/>
            <person name="Hennequin C."/>
            <person name="Jauniaux N."/>
            <person name="Joyet P."/>
            <person name="Kachouri R."/>
            <person name="Kerrest A."/>
            <person name="Koszul R."/>
            <person name="Lemaire M."/>
            <person name="Lesur I."/>
            <person name="Ma L."/>
            <person name="Muller H."/>
            <person name="Nicaud J.-M."/>
            <person name="Nikolski M."/>
            <person name="Oztas S."/>
            <person name="Ozier-Kalogeropoulos O."/>
            <person name="Pellenz S."/>
            <person name="Potier S."/>
            <person name="Richard G.-F."/>
            <person name="Straub M.-L."/>
            <person name="Suleau A."/>
            <person name="Swennen D."/>
            <person name="Tekaia F."/>
            <person name="Wesolowski-Louvel M."/>
            <person name="Westhof E."/>
            <person name="Wirth B."/>
            <person name="Zeniou-Meyer M."/>
            <person name="Zivanovic Y."/>
            <person name="Bolotin-Fukuhara M."/>
            <person name="Thierry A."/>
            <person name="Bouchier C."/>
            <person name="Caudron B."/>
            <person name="Scarpelli C."/>
            <person name="Gaillardin C."/>
            <person name="Weissenbach J."/>
            <person name="Wincker P."/>
            <person name="Souciet J.-L."/>
        </authorList>
    </citation>
    <scope>NUCLEOTIDE SEQUENCE [LARGE SCALE GENOMIC DNA]</scope>
    <source>
        <strain>ATCC 8585 / CBS 2359 / DSM 70799 / NBRC 1267 / NRRL Y-1140 / WM37</strain>
    </source>
</reference>
<keyword id="KW-0072">Autophagy</keyword>
<keyword id="KW-0653">Protein transport</keyword>
<keyword id="KW-1185">Reference proteome</keyword>
<keyword id="KW-0813">Transport</keyword>
<feature type="chain" id="PRO_0000318058" description="Autophagy-related protein 29">
    <location>
        <begin position="1"/>
        <end position="154"/>
    </location>
</feature>